<sequence length="220" mass="24852">MAYRDQPLGELALSIPRASALFRKYDMDYCCGGKQTLARAAARKELDVEVIEAELAKLAEQPIEKDWRSAPLAEIIDHIIVRYHARHREQLPELILQATKVERVHADKPSVPKGLTKYLTMLHEELSSHMMKEEQILFPMIKQGMGSQAMGPISVMESEHDEAGELLEVIKHNTNNVTPPPEACTTWKAMYNGINELIDDLMDHISLENNVLFPRALAGE</sequence>
<keyword id="KW-0963">Cytoplasm</keyword>
<keyword id="KW-0408">Iron</keyword>
<keyword id="KW-0479">Metal-binding</keyword>
<keyword id="KW-1185">Reference proteome</keyword>
<keyword id="KW-0346">Stress response</keyword>
<name>YTFE_ECO57</name>
<proteinExistence type="inferred from homology"/>
<evidence type="ECO:0000255" key="1">
    <source>
        <dbReference type="HAMAP-Rule" id="MF_01606"/>
    </source>
</evidence>
<organism>
    <name type="scientific">Escherichia coli O157:H7</name>
    <dbReference type="NCBI Taxonomy" id="83334"/>
    <lineage>
        <taxon>Bacteria</taxon>
        <taxon>Pseudomonadati</taxon>
        <taxon>Pseudomonadota</taxon>
        <taxon>Gammaproteobacteria</taxon>
        <taxon>Enterobacterales</taxon>
        <taxon>Enterobacteriaceae</taxon>
        <taxon>Escherichia</taxon>
    </lineage>
</organism>
<feature type="chain" id="PRO_0000213051" description="Iron-sulfur cluster repair protein YtfE">
    <location>
        <begin position="1"/>
        <end position="220"/>
    </location>
</feature>
<protein>
    <recommendedName>
        <fullName evidence="1">Iron-sulfur cluster repair protein YtfE</fullName>
    </recommendedName>
</protein>
<comment type="function">
    <text evidence="1">Di-iron-containing protein involved in the repair of iron-sulfur clusters damaged by oxidative and nitrosative stress conditions.</text>
</comment>
<comment type="subunit">
    <text evidence="1">Homodimer.</text>
</comment>
<comment type="subcellular location">
    <subcellularLocation>
        <location evidence="1">Cytoplasm</location>
    </subcellularLocation>
</comment>
<comment type="similarity">
    <text evidence="1">Belongs to the RIC family. YtfE subfamily.</text>
</comment>
<reference key="1">
    <citation type="journal article" date="2001" name="Nature">
        <title>Genome sequence of enterohaemorrhagic Escherichia coli O157:H7.</title>
        <authorList>
            <person name="Perna N.T."/>
            <person name="Plunkett G. III"/>
            <person name="Burland V."/>
            <person name="Mau B."/>
            <person name="Glasner J.D."/>
            <person name="Rose D.J."/>
            <person name="Mayhew G.F."/>
            <person name="Evans P.S."/>
            <person name="Gregor J."/>
            <person name="Kirkpatrick H.A."/>
            <person name="Posfai G."/>
            <person name="Hackett J."/>
            <person name="Klink S."/>
            <person name="Boutin A."/>
            <person name="Shao Y."/>
            <person name="Miller L."/>
            <person name="Grotbeck E.J."/>
            <person name="Davis N.W."/>
            <person name="Lim A."/>
            <person name="Dimalanta E.T."/>
            <person name="Potamousis K."/>
            <person name="Apodaca J."/>
            <person name="Anantharaman T.S."/>
            <person name="Lin J."/>
            <person name="Yen G."/>
            <person name="Schwartz D.C."/>
            <person name="Welch R.A."/>
            <person name="Blattner F.R."/>
        </authorList>
    </citation>
    <scope>NUCLEOTIDE SEQUENCE [LARGE SCALE GENOMIC DNA]</scope>
    <source>
        <strain>O157:H7 / EDL933 / ATCC 700927 / EHEC</strain>
    </source>
</reference>
<reference key="2">
    <citation type="journal article" date="2001" name="DNA Res.">
        <title>Complete genome sequence of enterohemorrhagic Escherichia coli O157:H7 and genomic comparison with a laboratory strain K-12.</title>
        <authorList>
            <person name="Hayashi T."/>
            <person name="Makino K."/>
            <person name="Ohnishi M."/>
            <person name="Kurokawa K."/>
            <person name="Ishii K."/>
            <person name="Yokoyama K."/>
            <person name="Han C.-G."/>
            <person name="Ohtsubo E."/>
            <person name="Nakayama K."/>
            <person name="Murata T."/>
            <person name="Tanaka M."/>
            <person name="Tobe T."/>
            <person name="Iida T."/>
            <person name="Takami H."/>
            <person name="Honda T."/>
            <person name="Sasakawa C."/>
            <person name="Ogasawara N."/>
            <person name="Yasunaga T."/>
            <person name="Kuhara S."/>
            <person name="Shiba T."/>
            <person name="Hattori M."/>
            <person name="Shinagawa H."/>
        </authorList>
    </citation>
    <scope>NUCLEOTIDE SEQUENCE [LARGE SCALE GENOMIC DNA]</scope>
    <source>
        <strain>O157:H7 / Sakai / RIMD 0509952 / EHEC</strain>
    </source>
</reference>
<dbReference type="EMBL" id="AE005174">
    <property type="protein sequence ID" value="AAG59407.1"/>
    <property type="molecule type" value="Genomic_DNA"/>
</dbReference>
<dbReference type="EMBL" id="BA000007">
    <property type="protein sequence ID" value="BAB38610.1"/>
    <property type="molecule type" value="Genomic_DNA"/>
</dbReference>
<dbReference type="PIR" id="C86118">
    <property type="entry name" value="C86118"/>
</dbReference>
<dbReference type="PIR" id="C91277">
    <property type="entry name" value="C91277"/>
</dbReference>
<dbReference type="RefSeq" id="NP_313214.1">
    <property type="nucleotide sequence ID" value="NC_002695.1"/>
</dbReference>
<dbReference type="RefSeq" id="WP_000331454.1">
    <property type="nucleotide sequence ID" value="NZ_VOAI01000023.1"/>
</dbReference>
<dbReference type="SMR" id="Q8XCH9"/>
<dbReference type="STRING" id="155864.Z5820"/>
<dbReference type="GeneID" id="913956"/>
<dbReference type="KEGG" id="ece:Z5820"/>
<dbReference type="KEGG" id="ecs:ECs_5187"/>
<dbReference type="PATRIC" id="fig|386585.9.peg.5422"/>
<dbReference type="eggNOG" id="COG2846">
    <property type="taxonomic scope" value="Bacteria"/>
</dbReference>
<dbReference type="HOGENOM" id="CLU_076075_2_0_6"/>
<dbReference type="OMA" id="ACTTWRV"/>
<dbReference type="Proteomes" id="UP000000558">
    <property type="component" value="Chromosome"/>
</dbReference>
<dbReference type="Proteomes" id="UP000002519">
    <property type="component" value="Chromosome"/>
</dbReference>
<dbReference type="GO" id="GO:0005737">
    <property type="term" value="C:cytoplasm"/>
    <property type="evidence" value="ECO:0007669"/>
    <property type="project" value="UniProtKB-SubCell"/>
</dbReference>
<dbReference type="GO" id="GO:0046872">
    <property type="term" value="F:metal ion binding"/>
    <property type="evidence" value="ECO:0007669"/>
    <property type="project" value="UniProtKB-KW"/>
</dbReference>
<dbReference type="GO" id="GO:0030091">
    <property type="term" value="P:protein repair"/>
    <property type="evidence" value="ECO:0007669"/>
    <property type="project" value="UniProtKB-UniRule"/>
</dbReference>
<dbReference type="GO" id="GO:0051409">
    <property type="term" value="P:response to nitrosative stress"/>
    <property type="evidence" value="ECO:0007669"/>
    <property type="project" value="UniProtKB-UniRule"/>
</dbReference>
<dbReference type="GO" id="GO:0006979">
    <property type="term" value="P:response to oxidative stress"/>
    <property type="evidence" value="ECO:0007669"/>
    <property type="project" value="UniProtKB-UniRule"/>
</dbReference>
<dbReference type="FunFam" id="1.20.120.520:FF:000001">
    <property type="entry name" value="Iron-sulfur cluster repair protein YtfE"/>
    <property type="match status" value="1"/>
</dbReference>
<dbReference type="Gene3D" id="1.20.120.520">
    <property type="entry name" value="nmb1532 protein domain like"/>
    <property type="match status" value="1"/>
</dbReference>
<dbReference type="HAMAP" id="MF_01606">
    <property type="entry name" value="RIC_YtfE"/>
    <property type="match status" value="1"/>
</dbReference>
<dbReference type="InterPro" id="IPR023742">
    <property type="entry name" value="FeS-repair_YftE"/>
</dbReference>
<dbReference type="InterPro" id="IPR012312">
    <property type="entry name" value="Hemerythrin-like"/>
</dbReference>
<dbReference type="InterPro" id="IPR019903">
    <property type="entry name" value="RIC_family"/>
</dbReference>
<dbReference type="NCBIfam" id="TIGR03652">
    <property type="entry name" value="FeS_repair_RIC"/>
    <property type="match status" value="1"/>
</dbReference>
<dbReference type="NCBIfam" id="NF008221">
    <property type="entry name" value="PRK10992.1"/>
    <property type="match status" value="1"/>
</dbReference>
<dbReference type="PANTHER" id="PTHR36438">
    <property type="entry name" value="IRON-SULFUR CLUSTER REPAIR PROTEIN YTFE"/>
    <property type="match status" value="1"/>
</dbReference>
<dbReference type="PANTHER" id="PTHR36438:SF1">
    <property type="entry name" value="IRON-SULFUR CLUSTER REPAIR PROTEIN YTFE"/>
    <property type="match status" value="1"/>
</dbReference>
<dbReference type="Pfam" id="PF01814">
    <property type="entry name" value="Hemerythrin"/>
    <property type="match status" value="1"/>
</dbReference>
<dbReference type="Pfam" id="PF04405">
    <property type="entry name" value="ScdA_N"/>
    <property type="match status" value="1"/>
</dbReference>
<gene>
    <name evidence="1" type="primary">ytfE</name>
    <name type="ordered locus">Z5820</name>
    <name type="ordered locus">ECs5187</name>
</gene>
<accession>Q8XCH9</accession>
<accession>Q7A8T9</accession>